<comment type="function">
    <text evidence="1">Cell wall formation.</text>
</comment>
<comment type="catalytic activity">
    <reaction evidence="1">
        <text>UDP-N-acetyl-alpha-D-muramate + L-alanine + ATP = UDP-N-acetyl-alpha-D-muramoyl-L-alanine + ADP + phosphate + H(+)</text>
        <dbReference type="Rhea" id="RHEA:23372"/>
        <dbReference type="ChEBI" id="CHEBI:15378"/>
        <dbReference type="ChEBI" id="CHEBI:30616"/>
        <dbReference type="ChEBI" id="CHEBI:43474"/>
        <dbReference type="ChEBI" id="CHEBI:57972"/>
        <dbReference type="ChEBI" id="CHEBI:70757"/>
        <dbReference type="ChEBI" id="CHEBI:83898"/>
        <dbReference type="ChEBI" id="CHEBI:456216"/>
        <dbReference type="EC" id="6.3.2.8"/>
    </reaction>
</comment>
<comment type="pathway">
    <text evidence="1">Cell wall biogenesis; peptidoglycan biosynthesis.</text>
</comment>
<comment type="subcellular location">
    <subcellularLocation>
        <location evidence="1">Cytoplasm</location>
    </subcellularLocation>
</comment>
<comment type="similarity">
    <text evidence="1">Belongs to the MurCDEF family.</text>
</comment>
<proteinExistence type="inferred from homology"/>
<name>MURC_SALSV</name>
<organism>
    <name type="scientific">Salmonella schwarzengrund (strain CVM19633)</name>
    <dbReference type="NCBI Taxonomy" id="439843"/>
    <lineage>
        <taxon>Bacteria</taxon>
        <taxon>Pseudomonadati</taxon>
        <taxon>Pseudomonadota</taxon>
        <taxon>Gammaproteobacteria</taxon>
        <taxon>Enterobacterales</taxon>
        <taxon>Enterobacteriaceae</taxon>
        <taxon>Salmonella</taxon>
    </lineage>
</organism>
<gene>
    <name evidence="1" type="primary">murC</name>
    <name type="ordered locus">SeSA_A0145</name>
</gene>
<sequence length="491" mass="53438">MNTQQLAKLRSIVPEMRRVRHIHFVGIGGAGMGGIAEVLANEGYQISGSDLAPNPVTQQLTSLGATIFFNHRPENVRDASVVVVSSAISADNPEIVAAHEARIPVIRRAEMLAELMRFRHGIAIAGTHGKTTTTAMVSSIYAEAGLDPTFVNGGLVKAAGVHARLGHSRYLIAEADESDASFLHLQPMVAIVTNIEADHMDTYHGDFENLKQTFINFLHNLPFYGRAVMCVDDPVIRELLPRVGRQTTTYGFSEDADVRVEDYQQIGPQGHFTLLRQGMPDLHVTLNAPGRHNALNAAAAVAVATEEGIADDAILRALESFQGTGRRFDFLGEFPLEPVNGKAGTAMLVDDYGHHPTEVDATIKAARAGWPDKNLVMLFQPHRYTRTRDLYDDFANVLTQVDALLMLDVYPAGEAPIPGADSRSLCRTIRNRGKIDPILVSDPAQVATMLAPVLTGNDLILVQGAGNVGKIARYLSEIKLKPQIQEEEQHG</sequence>
<accession>B4TXH9</accession>
<protein>
    <recommendedName>
        <fullName evidence="1">UDP-N-acetylmuramate--L-alanine ligase</fullName>
        <ecNumber evidence="1">6.3.2.8</ecNumber>
    </recommendedName>
    <alternativeName>
        <fullName evidence="1">UDP-N-acetylmuramoyl-L-alanine synthetase</fullName>
    </alternativeName>
</protein>
<dbReference type="EC" id="6.3.2.8" evidence="1"/>
<dbReference type="EMBL" id="CP001127">
    <property type="protein sequence ID" value="ACF89368.1"/>
    <property type="molecule type" value="Genomic_DNA"/>
</dbReference>
<dbReference type="RefSeq" id="WP_001096070.1">
    <property type="nucleotide sequence ID" value="NC_011094.1"/>
</dbReference>
<dbReference type="SMR" id="B4TXH9"/>
<dbReference type="KEGG" id="sew:SeSA_A0145"/>
<dbReference type="HOGENOM" id="CLU_028104_2_2_6"/>
<dbReference type="UniPathway" id="UPA00219"/>
<dbReference type="Proteomes" id="UP000001865">
    <property type="component" value="Chromosome"/>
</dbReference>
<dbReference type="GO" id="GO:0005737">
    <property type="term" value="C:cytoplasm"/>
    <property type="evidence" value="ECO:0007669"/>
    <property type="project" value="UniProtKB-SubCell"/>
</dbReference>
<dbReference type="GO" id="GO:0005524">
    <property type="term" value="F:ATP binding"/>
    <property type="evidence" value="ECO:0007669"/>
    <property type="project" value="UniProtKB-UniRule"/>
</dbReference>
<dbReference type="GO" id="GO:0008763">
    <property type="term" value="F:UDP-N-acetylmuramate-L-alanine ligase activity"/>
    <property type="evidence" value="ECO:0007669"/>
    <property type="project" value="UniProtKB-UniRule"/>
</dbReference>
<dbReference type="GO" id="GO:0051301">
    <property type="term" value="P:cell division"/>
    <property type="evidence" value="ECO:0007669"/>
    <property type="project" value="UniProtKB-KW"/>
</dbReference>
<dbReference type="GO" id="GO:0071555">
    <property type="term" value="P:cell wall organization"/>
    <property type="evidence" value="ECO:0007669"/>
    <property type="project" value="UniProtKB-KW"/>
</dbReference>
<dbReference type="GO" id="GO:0009252">
    <property type="term" value="P:peptidoglycan biosynthetic process"/>
    <property type="evidence" value="ECO:0007669"/>
    <property type="project" value="UniProtKB-UniRule"/>
</dbReference>
<dbReference type="GO" id="GO:0008360">
    <property type="term" value="P:regulation of cell shape"/>
    <property type="evidence" value="ECO:0007669"/>
    <property type="project" value="UniProtKB-KW"/>
</dbReference>
<dbReference type="FunFam" id="3.40.1190.10:FF:000001">
    <property type="entry name" value="UDP-N-acetylmuramate--L-alanine ligase"/>
    <property type="match status" value="1"/>
</dbReference>
<dbReference type="FunFam" id="3.40.50.720:FF:000046">
    <property type="entry name" value="UDP-N-acetylmuramate--L-alanine ligase"/>
    <property type="match status" value="1"/>
</dbReference>
<dbReference type="FunFam" id="3.90.190.20:FF:000001">
    <property type="entry name" value="UDP-N-acetylmuramate--L-alanine ligase"/>
    <property type="match status" value="1"/>
</dbReference>
<dbReference type="Gene3D" id="3.90.190.20">
    <property type="entry name" value="Mur ligase, C-terminal domain"/>
    <property type="match status" value="1"/>
</dbReference>
<dbReference type="Gene3D" id="3.40.1190.10">
    <property type="entry name" value="Mur-like, catalytic domain"/>
    <property type="match status" value="1"/>
</dbReference>
<dbReference type="Gene3D" id="3.40.50.720">
    <property type="entry name" value="NAD(P)-binding Rossmann-like Domain"/>
    <property type="match status" value="1"/>
</dbReference>
<dbReference type="HAMAP" id="MF_00046">
    <property type="entry name" value="MurC"/>
    <property type="match status" value="1"/>
</dbReference>
<dbReference type="InterPro" id="IPR036565">
    <property type="entry name" value="Mur-like_cat_sf"/>
</dbReference>
<dbReference type="InterPro" id="IPR004101">
    <property type="entry name" value="Mur_ligase_C"/>
</dbReference>
<dbReference type="InterPro" id="IPR036615">
    <property type="entry name" value="Mur_ligase_C_dom_sf"/>
</dbReference>
<dbReference type="InterPro" id="IPR013221">
    <property type="entry name" value="Mur_ligase_cen"/>
</dbReference>
<dbReference type="InterPro" id="IPR000713">
    <property type="entry name" value="Mur_ligase_N"/>
</dbReference>
<dbReference type="InterPro" id="IPR050061">
    <property type="entry name" value="MurCDEF_pg_biosynth"/>
</dbReference>
<dbReference type="InterPro" id="IPR005758">
    <property type="entry name" value="UDP-N-AcMur_Ala_ligase_MurC"/>
</dbReference>
<dbReference type="NCBIfam" id="TIGR01082">
    <property type="entry name" value="murC"/>
    <property type="match status" value="1"/>
</dbReference>
<dbReference type="PANTHER" id="PTHR43445:SF3">
    <property type="entry name" value="UDP-N-ACETYLMURAMATE--L-ALANINE LIGASE"/>
    <property type="match status" value="1"/>
</dbReference>
<dbReference type="PANTHER" id="PTHR43445">
    <property type="entry name" value="UDP-N-ACETYLMURAMATE--L-ALANINE LIGASE-RELATED"/>
    <property type="match status" value="1"/>
</dbReference>
<dbReference type="Pfam" id="PF01225">
    <property type="entry name" value="Mur_ligase"/>
    <property type="match status" value="1"/>
</dbReference>
<dbReference type="Pfam" id="PF02875">
    <property type="entry name" value="Mur_ligase_C"/>
    <property type="match status" value="1"/>
</dbReference>
<dbReference type="Pfam" id="PF08245">
    <property type="entry name" value="Mur_ligase_M"/>
    <property type="match status" value="1"/>
</dbReference>
<dbReference type="SUPFAM" id="SSF51984">
    <property type="entry name" value="MurCD N-terminal domain"/>
    <property type="match status" value="1"/>
</dbReference>
<dbReference type="SUPFAM" id="SSF53623">
    <property type="entry name" value="MurD-like peptide ligases, catalytic domain"/>
    <property type="match status" value="1"/>
</dbReference>
<dbReference type="SUPFAM" id="SSF53244">
    <property type="entry name" value="MurD-like peptide ligases, peptide-binding domain"/>
    <property type="match status" value="1"/>
</dbReference>
<reference key="1">
    <citation type="journal article" date="2011" name="J. Bacteriol.">
        <title>Comparative genomics of 28 Salmonella enterica isolates: evidence for CRISPR-mediated adaptive sublineage evolution.</title>
        <authorList>
            <person name="Fricke W.F."/>
            <person name="Mammel M.K."/>
            <person name="McDermott P.F."/>
            <person name="Tartera C."/>
            <person name="White D.G."/>
            <person name="Leclerc J.E."/>
            <person name="Ravel J."/>
            <person name="Cebula T.A."/>
        </authorList>
    </citation>
    <scope>NUCLEOTIDE SEQUENCE [LARGE SCALE GENOMIC DNA]</scope>
    <source>
        <strain>CVM19633</strain>
    </source>
</reference>
<feature type="chain" id="PRO_1000091135" description="UDP-N-acetylmuramate--L-alanine ligase">
    <location>
        <begin position="1"/>
        <end position="491"/>
    </location>
</feature>
<feature type="binding site" evidence="1">
    <location>
        <begin position="126"/>
        <end position="132"/>
    </location>
    <ligand>
        <name>ATP</name>
        <dbReference type="ChEBI" id="CHEBI:30616"/>
    </ligand>
</feature>
<keyword id="KW-0067">ATP-binding</keyword>
<keyword id="KW-0131">Cell cycle</keyword>
<keyword id="KW-0132">Cell division</keyword>
<keyword id="KW-0133">Cell shape</keyword>
<keyword id="KW-0961">Cell wall biogenesis/degradation</keyword>
<keyword id="KW-0963">Cytoplasm</keyword>
<keyword id="KW-0436">Ligase</keyword>
<keyword id="KW-0547">Nucleotide-binding</keyword>
<keyword id="KW-0573">Peptidoglycan synthesis</keyword>
<evidence type="ECO:0000255" key="1">
    <source>
        <dbReference type="HAMAP-Rule" id="MF_00046"/>
    </source>
</evidence>